<dbReference type="EC" id="3.2.1.1"/>
<dbReference type="EMBL" id="CU329670">
    <property type="protein sequence ID" value="CAD62442.2"/>
    <property type="molecule type" value="Genomic_DNA"/>
</dbReference>
<dbReference type="EMBL" id="AB054314">
    <property type="protein sequence ID" value="BAB60880.1"/>
    <property type="molecule type" value="mRNA"/>
</dbReference>
<dbReference type="PIR" id="T38770">
    <property type="entry name" value="T38770"/>
</dbReference>
<dbReference type="RefSeq" id="XP_001713068.1">
    <property type="nucleotide sequence ID" value="XM_001713016.2"/>
</dbReference>
<dbReference type="SMR" id="O14154"/>
<dbReference type="BioGRID" id="280575">
    <property type="interactions" value="10"/>
</dbReference>
<dbReference type="FunCoup" id="O14154">
    <property type="interactions" value="141"/>
</dbReference>
<dbReference type="STRING" id="284812.O14154"/>
<dbReference type="CAZy" id="GH13">
    <property type="family name" value="Glycoside Hydrolase Family 13"/>
</dbReference>
<dbReference type="GlyCosmos" id="O14154">
    <property type="glycosylation" value="2 sites, No reported glycans"/>
</dbReference>
<dbReference type="PaxDb" id="4896-SPAC25H1.09.1"/>
<dbReference type="EnsemblFungi" id="SPAC25H1.09.1">
    <property type="protein sequence ID" value="SPAC25H1.09.1:pep"/>
    <property type="gene ID" value="SPAC25H1.09"/>
</dbReference>
<dbReference type="PomBase" id="SPAC25H1.09">
    <property type="gene designation" value="mde5"/>
</dbReference>
<dbReference type="VEuPathDB" id="FungiDB:SPAC25H1.09"/>
<dbReference type="eggNOG" id="KOG0471">
    <property type="taxonomic scope" value="Eukaryota"/>
</dbReference>
<dbReference type="HOGENOM" id="CLU_006462_7_2_1"/>
<dbReference type="InParanoid" id="O14154"/>
<dbReference type="OMA" id="AHNWLFT"/>
<dbReference type="PhylomeDB" id="O14154"/>
<dbReference type="PRO" id="PR:O14154"/>
<dbReference type="Proteomes" id="UP000002485">
    <property type="component" value="Chromosome I"/>
</dbReference>
<dbReference type="GO" id="GO:0005783">
    <property type="term" value="C:endoplasmic reticulum"/>
    <property type="evidence" value="ECO:0007669"/>
    <property type="project" value="UniProtKB-SubCell"/>
</dbReference>
<dbReference type="GO" id="GO:0009897">
    <property type="term" value="C:external side of plasma membrane"/>
    <property type="evidence" value="ECO:0000304"/>
    <property type="project" value="PomBase"/>
</dbReference>
<dbReference type="GO" id="GO:0004556">
    <property type="term" value="F:alpha-amylase activity"/>
    <property type="evidence" value="ECO:0007669"/>
    <property type="project" value="UniProtKB-EC"/>
</dbReference>
<dbReference type="GO" id="GO:0005509">
    <property type="term" value="F:calcium ion binding"/>
    <property type="evidence" value="ECO:0000303"/>
    <property type="project" value="PomBase"/>
</dbReference>
<dbReference type="GO" id="GO:0016052">
    <property type="term" value="P:carbohydrate catabolic process"/>
    <property type="evidence" value="ECO:0007669"/>
    <property type="project" value="InterPro"/>
</dbReference>
<dbReference type="CDD" id="cd11319">
    <property type="entry name" value="AmyAc_euk_AmyA"/>
    <property type="match status" value="1"/>
</dbReference>
<dbReference type="FunFam" id="3.20.20.80:FF:000120">
    <property type="entry name" value="Alpha-amylase A"/>
    <property type="match status" value="1"/>
</dbReference>
<dbReference type="Gene3D" id="3.20.20.80">
    <property type="entry name" value="Glycosidases"/>
    <property type="match status" value="1"/>
</dbReference>
<dbReference type="Gene3D" id="2.60.40.1180">
    <property type="entry name" value="Golgi alpha-mannosidase II"/>
    <property type="match status" value="1"/>
</dbReference>
<dbReference type="InterPro" id="IPR013777">
    <property type="entry name" value="A-amylase-like"/>
</dbReference>
<dbReference type="InterPro" id="IPR015340">
    <property type="entry name" value="A_amylase_C_dom"/>
</dbReference>
<dbReference type="InterPro" id="IPR006047">
    <property type="entry name" value="Glyco_hydro_13_cat_dom"/>
</dbReference>
<dbReference type="InterPro" id="IPR013780">
    <property type="entry name" value="Glyco_hydro_b"/>
</dbReference>
<dbReference type="InterPro" id="IPR017853">
    <property type="entry name" value="Glycoside_hydrolase_SF"/>
</dbReference>
<dbReference type="PANTHER" id="PTHR10357">
    <property type="entry name" value="ALPHA-AMYLASE FAMILY MEMBER"/>
    <property type="match status" value="1"/>
</dbReference>
<dbReference type="PANTHER" id="PTHR10357:SF223">
    <property type="entry name" value="ALPHA-AMYLASE MDE5"/>
    <property type="match status" value="1"/>
</dbReference>
<dbReference type="Pfam" id="PF09260">
    <property type="entry name" value="A_amylase_dom_C"/>
    <property type="match status" value="1"/>
</dbReference>
<dbReference type="Pfam" id="PF00128">
    <property type="entry name" value="Alpha-amylase"/>
    <property type="match status" value="1"/>
</dbReference>
<dbReference type="PIRSF" id="PIRSF001024">
    <property type="entry name" value="Alph-amyl_fung"/>
    <property type="match status" value="1"/>
</dbReference>
<dbReference type="SMART" id="SM00642">
    <property type="entry name" value="Aamy"/>
    <property type="match status" value="1"/>
</dbReference>
<dbReference type="SUPFAM" id="SSF51445">
    <property type="entry name" value="(Trans)glycosidases"/>
    <property type="match status" value="1"/>
</dbReference>
<dbReference type="SUPFAM" id="SSF51011">
    <property type="entry name" value="Glycosyl hydrolase domain"/>
    <property type="match status" value="1"/>
</dbReference>
<evidence type="ECO:0000250" key="1"/>
<evidence type="ECO:0000250" key="2">
    <source>
        <dbReference type="UniProtKB" id="P0C1B3"/>
    </source>
</evidence>
<evidence type="ECO:0000250" key="3">
    <source>
        <dbReference type="UniProtKB" id="P56271"/>
    </source>
</evidence>
<evidence type="ECO:0000255" key="4"/>
<evidence type="ECO:0000269" key="5">
    <source>
    </source>
</evidence>
<evidence type="ECO:0000305" key="6"/>
<organism>
    <name type="scientific">Schizosaccharomyces pombe (strain 972 / ATCC 24843)</name>
    <name type="common">Fission yeast</name>
    <dbReference type="NCBI Taxonomy" id="284812"/>
    <lineage>
        <taxon>Eukaryota</taxon>
        <taxon>Fungi</taxon>
        <taxon>Dikarya</taxon>
        <taxon>Ascomycota</taxon>
        <taxon>Taphrinomycotina</taxon>
        <taxon>Schizosaccharomycetes</taxon>
        <taxon>Schizosaccharomycetales</taxon>
        <taxon>Schizosaccharomycetaceae</taxon>
        <taxon>Schizosaccharomyces</taxon>
    </lineage>
</organism>
<comment type="catalytic activity">
    <reaction>
        <text>Endohydrolysis of (1-&gt;4)-alpha-D-glucosidic linkages in polysaccharides containing three or more (1-&gt;4)-alpha-linked D-glucose units.</text>
        <dbReference type="EC" id="3.2.1.1"/>
    </reaction>
</comment>
<comment type="cofactor">
    <cofactor evidence="2">
        <name>Ca(2+)</name>
        <dbReference type="ChEBI" id="CHEBI:29108"/>
    </cofactor>
    <text evidence="2">Binds 2 calcium ions per subunit. Calcium is inhibitory at high concentrations.</text>
</comment>
<comment type="subcellular location">
    <subcellularLocation>
        <location evidence="5">Endoplasmic reticulum</location>
    </subcellularLocation>
</comment>
<comment type="similarity">
    <text evidence="6">Belongs to the glycosyl hydrolase 13 family.</text>
</comment>
<feature type="signal peptide" evidence="4">
    <location>
        <begin position="1"/>
        <end position="25"/>
    </location>
</feature>
<feature type="chain" id="PRO_0000001357" description="Alpha-amylase mde5">
    <location>
        <begin position="26"/>
        <end position="513"/>
    </location>
</feature>
<feature type="active site" description="Nucleophile" evidence="3">
    <location>
        <position position="226"/>
    </location>
</feature>
<feature type="active site" description="Proton donor" evidence="3">
    <location>
        <position position="250"/>
    </location>
</feature>
<feature type="binding site" evidence="2">
    <location>
        <position position="105"/>
    </location>
    <ligand>
        <name>substrate</name>
    </ligand>
</feature>
<feature type="binding site" evidence="2">
    <location>
        <position position="143"/>
    </location>
    <ligand>
        <name>Ca(2+)</name>
        <dbReference type="ChEBI" id="CHEBI:29108"/>
        <label>1</label>
    </ligand>
</feature>
<feature type="binding site" evidence="2">
    <location>
        <position position="144"/>
    </location>
    <ligand>
        <name>substrate</name>
    </ligand>
</feature>
<feature type="binding site" evidence="3">
    <location>
        <position position="182"/>
    </location>
    <ligand>
        <name>Ca(2+)</name>
        <dbReference type="ChEBI" id="CHEBI:29108"/>
        <label>1</label>
    </ligand>
</feature>
<feature type="binding site" evidence="3">
    <location>
        <position position="195"/>
    </location>
    <ligand>
        <name>Ca(2+)</name>
        <dbReference type="ChEBI" id="CHEBI:29108"/>
        <label>1</label>
    </ligand>
</feature>
<feature type="binding site" evidence="2">
    <location>
        <position position="224"/>
    </location>
    <ligand>
        <name>substrate</name>
    </ligand>
</feature>
<feature type="binding site" evidence="2">
    <location>
        <position position="226"/>
    </location>
    <ligand>
        <name>Ca(2+)</name>
        <dbReference type="ChEBI" id="CHEBI:29108"/>
        <label>2</label>
    </ligand>
</feature>
<feature type="binding site" evidence="2">
    <location>
        <begin position="229"/>
        <end position="230"/>
    </location>
    <ligand>
        <name>substrate</name>
    </ligand>
</feature>
<feature type="binding site" evidence="2">
    <location>
        <position position="230"/>
    </location>
    <ligand>
        <name>Ca(2+)</name>
        <dbReference type="ChEBI" id="CHEBI:29108"/>
        <label>1</label>
    </ligand>
</feature>
<feature type="binding site" evidence="2">
    <location>
        <position position="250"/>
    </location>
    <ligand>
        <name>Ca(2+)</name>
        <dbReference type="ChEBI" id="CHEBI:29108"/>
        <label>2</label>
    </ligand>
</feature>
<feature type="binding site" evidence="2">
    <location>
        <position position="254"/>
    </location>
    <ligand>
        <name>substrate</name>
    </ligand>
</feature>
<feature type="binding site" evidence="2">
    <location>
        <position position="318"/>
    </location>
    <ligand>
        <name>substrate</name>
    </ligand>
</feature>
<feature type="binding site" evidence="2">
    <location>
        <position position="365"/>
    </location>
    <ligand>
        <name>substrate</name>
    </ligand>
</feature>
<feature type="site" description="Transition state stabilizer" evidence="2">
    <location>
        <position position="318"/>
    </location>
</feature>
<feature type="glycosylation site" description="N-linked (GlcNAc...) asparagine" evidence="4">
    <location>
        <position position="162"/>
    </location>
</feature>
<feature type="glycosylation site" description="N-linked (GlcNAc...) asparagine" evidence="4">
    <location>
        <position position="357"/>
    </location>
</feature>
<feature type="disulfide bond" evidence="3">
    <location>
        <begin position="52"/>
        <end position="60"/>
    </location>
</feature>
<feature type="disulfide bond" evidence="3">
    <location>
        <begin position="171"/>
        <end position="184"/>
    </location>
</feature>
<feature type="disulfide bond" evidence="3">
    <location>
        <begin position="260"/>
        <end position="304"/>
    </location>
</feature>
<feature type="disulfide bond" evidence="1">
    <location>
        <begin position="454"/>
        <end position="488"/>
    </location>
</feature>
<reference key="1">
    <citation type="journal article" date="2002" name="Nature">
        <title>The genome sequence of Schizosaccharomyces pombe.</title>
        <authorList>
            <person name="Wood V."/>
            <person name="Gwilliam R."/>
            <person name="Rajandream M.A."/>
            <person name="Lyne M.H."/>
            <person name="Lyne R."/>
            <person name="Stewart A."/>
            <person name="Sgouros J.G."/>
            <person name="Peat N."/>
            <person name="Hayles J."/>
            <person name="Baker S.G."/>
            <person name="Basham D."/>
            <person name="Bowman S."/>
            <person name="Brooks K."/>
            <person name="Brown D."/>
            <person name="Brown S."/>
            <person name="Chillingworth T."/>
            <person name="Churcher C.M."/>
            <person name="Collins M."/>
            <person name="Connor R."/>
            <person name="Cronin A."/>
            <person name="Davis P."/>
            <person name="Feltwell T."/>
            <person name="Fraser A."/>
            <person name="Gentles S."/>
            <person name="Goble A."/>
            <person name="Hamlin N."/>
            <person name="Harris D.E."/>
            <person name="Hidalgo J."/>
            <person name="Hodgson G."/>
            <person name="Holroyd S."/>
            <person name="Hornsby T."/>
            <person name="Howarth S."/>
            <person name="Huckle E.J."/>
            <person name="Hunt S."/>
            <person name="Jagels K."/>
            <person name="James K.D."/>
            <person name="Jones L."/>
            <person name="Jones M."/>
            <person name="Leather S."/>
            <person name="McDonald S."/>
            <person name="McLean J."/>
            <person name="Mooney P."/>
            <person name="Moule S."/>
            <person name="Mungall K.L."/>
            <person name="Murphy L.D."/>
            <person name="Niblett D."/>
            <person name="Odell C."/>
            <person name="Oliver K."/>
            <person name="O'Neil S."/>
            <person name="Pearson D."/>
            <person name="Quail M.A."/>
            <person name="Rabbinowitsch E."/>
            <person name="Rutherford K.M."/>
            <person name="Rutter S."/>
            <person name="Saunders D."/>
            <person name="Seeger K."/>
            <person name="Sharp S."/>
            <person name="Skelton J."/>
            <person name="Simmonds M.N."/>
            <person name="Squares R."/>
            <person name="Squares S."/>
            <person name="Stevens K."/>
            <person name="Taylor K."/>
            <person name="Taylor R.G."/>
            <person name="Tivey A."/>
            <person name="Walsh S.V."/>
            <person name="Warren T."/>
            <person name="Whitehead S."/>
            <person name="Woodward J.R."/>
            <person name="Volckaert G."/>
            <person name="Aert R."/>
            <person name="Robben J."/>
            <person name="Grymonprez B."/>
            <person name="Weltjens I."/>
            <person name="Vanstreels E."/>
            <person name="Rieger M."/>
            <person name="Schaefer M."/>
            <person name="Mueller-Auer S."/>
            <person name="Gabel C."/>
            <person name="Fuchs M."/>
            <person name="Duesterhoeft A."/>
            <person name="Fritzc C."/>
            <person name="Holzer E."/>
            <person name="Moestl D."/>
            <person name="Hilbert H."/>
            <person name="Borzym K."/>
            <person name="Langer I."/>
            <person name="Beck A."/>
            <person name="Lehrach H."/>
            <person name="Reinhardt R."/>
            <person name="Pohl T.M."/>
            <person name="Eger P."/>
            <person name="Zimmermann W."/>
            <person name="Wedler H."/>
            <person name="Wambutt R."/>
            <person name="Purnelle B."/>
            <person name="Goffeau A."/>
            <person name="Cadieu E."/>
            <person name="Dreano S."/>
            <person name="Gloux S."/>
            <person name="Lelaure V."/>
            <person name="Mottier S."/>
            <person name="Galibert F."/>
            <person name="Aves S.J."/>
            <person name="Xiang Z."/>
            <person name="Hunt C."/>
            <person name="Moore K."/>
            <person name="Hurst S.M."/>
            <person name="Lucas M."/>
            <person name="Rochet M."/>
            <person name="Gaillardin C."/>
            <person name="Tallada V.A."/>
            <person name="Garzon A."/>
            <person name="Thode G."/>
            <person name="Daga R.R."/>
            <person name="Cruzado L."/>
            <person name="Jimenez J."/>
            <person name="Sanchez M."/>
            <person name="del Rey F."/>
            <person name="Benito J."/>
            <person name="Dominguez A."/>
            <person name="Revuelta J.L."/>
            <person name="Moreno S."/>
            <person name="Armstrong J."/>
            <person name="Forsburg S.L."/>
            <person name="Cerutti L."/>
            <person name="Lowe T."/>
            <person name="McCombie W.R."/>
            <person name="Paulsen I."/>
            <person name="Potashkin J."/>
            <person name="Shpakovski G.V."/>
            <person name="Ussery D."/>
            <person name="Barrell B.G."/>
            <person name="Nurse P."/>
        </authorList>
    </citation>
    <scope>NUCLEOTIDE SEQUENCE [LARGE SCALE GENOMIC DNA]</scope>
    <source>
        <strain>972 / ATCC 24843</strain>
    </source>
</reference>
<reference key="2">
    <citation type="journal article" date="2001" name="Nucleic Acids Res.">
        <title>Comprehensive isolation of meiosis-specific genes identifies novel proteins and unusual non-coding transcripts in Schizosaccharomyces pombe.</title>
        <authorList>
            <person name="Watanabe T."/>
            <person name="Miyashita K."/>
            <person name="Saito T.T."/>
            <person name="Yoneki T."/>
            <person name="Kakihara Y."/>
            <person name="Nabeshima K."/>
            <person name="Kishi Y.A."/>
            <person name="Shimoda C."/>
            <person name="Nojima H."/>
        </authorList>
    </citation>
    <scope>NUCLEOTIDE SEQUENCE [MRNA] OF 191-513</scope>
    <source>
        <strain>CD16-1</strain>
    </source>
</reference>
<reference key="3">
    <citation type="journal article" date="2006" name="Nat. Biotechnol.">
        <title>ORFeome cloning and global analysis of protein localization in the fission yeast Schizosaccharomyces pombe.</title>
        <authorList>
            <person name="Matsuyama A."/>
            <person name="Arai R."/>
            <person name="Yashiroda Y."/>
            <person name="Shirai A."/>
            <person name="Kamata A."/>
            <person name="Sekido S."/>
            <person name="Kobayashi Y."/>
            <person name="Hashimoto A."/>
            <person name="Hamamoto M."/>
            <person name="Hiraoka Y."/>
            <person name="Horinouchi S."/>
            <person name="Yoshida M."/>
        </authorList>
    </citation>
    <scope>SUBCELLULAR LOCATION [LARGE SCALE ANALYSIS]</scope>
</reference>
<protein>
    <recommendedName>
        <fullName>Alpha-amylase mde5</fullName>
        <ecNumber>3.2.1.1</ecNumber>
    </recommendedName>
    <alternativeName>
        <fullName>1,4-alpha-D-glucan glucanohydrolase</fullName>
    </alternativeName>
    <alternativeName>
        <fullName>Mei4-dependent protein 5</fullName>
    </alternativeName>
    <alternativeName>
        <fullName>Meiotic expression up-regulated protein 30</fullName>
    </alternativeName>
</protein>
<gene>
    <name type="primary">mde5</name>
    <name type="synonym">meu30</name>
    <name type="ORF">SPAC25H1.09</name>
    <name type="ORF">SPAC4A8.01</name>
</gene>
<accession>O14154</accession>
<accession>Q874R5</accession>
<accession>Q96WR6</accession>
<name>MDE5_SCHPO</name>
<keyword id="KW-0106">Calcium</keyword>
<keyword id="KW-0119">Carbohydrate metabolism</keyword>
<keyword id="KW-1015">Disulfide bond</keyword>
<keyword id="KW-0256">Endoplasmic reticulum</keyword>
<keyword id="KW-0325">Glycoprotein</keyword>
<keyword id="KW-0326">Glycosidase</keyword>
<keyword id="KW-0378">Hydrolase</keyword>
<keyword id="KW-0479">Metal-binding</keyword>
<keyword id="KW-1185">Reference proteome</keyword>
<keyword id="KW-0732">Signal</keyword>
<proteinExistence type="evidence at transcript level"/>
<sequence length="513" mass="58716">MKHNEVFGWTLKVLSFLLVVIPANALDKHGWRKQSIYSLLTDRFASTNPKPCNPEDREYCGGNWRGIIDKLDYIQGMGFTAIWISPIIKNIEGRTKYGEAYHGYWPQDLYTLNPHFGTEQDLIDLADALHDRGMYLMVDTVVNHMGSSDPRNIDYGIYRPFNQSSHYHPMCPIEQDKPLSLEQCWIGTEDMTLPDIDTENPQIIETLYNFIHDQVKQFKIDGLRVDATKHVRRTFWPGFCESAGVYCQGEEWTGQADLFCEWQEYMDGLHNFPVQGVAAESVIPLNDRALRKTAIAMNLVAHHCKDSTLLGLFLESQDAPRLAALNNDYTVLKNAMTLNLMSDGIPIVFYGQEQMFNGSHDPVNRPALWDQGYNTDGPLYQYTSKVNKIRRDLINSEDGEIYIRSITHAIMIGDHVMVMYKGPVITFITNYGAVDKEYLIKMPGSETMIDLLTCTLIEVEGEVMRTSIKKGEPKILYPYQLAFRDGFCQEQITLQEIDDVFMGRNEINGPDRK</sequence>